<keyword id="KW-0028">Amino-acid biosynthesis</keyword>
<keyword id="KW-0963">Cytoplasm</keyword>
<keyword id="KW-0456">Lyase</keyword>
<keyword id="KW-0479">Metal-binding</keyword>
<keyword id="KW-0486">Methionine biosynthesis</keyword>
<keyword id="KW-1185">Reference proteome</keyword>
<keyword id="KW-0862">Zinc</keyword>
<accession>Q6BIX5</accession>
<evidence type="ECO:0000255" key="1">
    <source>
        <dbReference type="HAMAP-Rule" id="MF_03116"/>
    </source>
</evidence>
<protein>
    <recommendedName>
        <fullName evidence="1">Methylthioribulose-1-phosphate dehydratase</fullName>
        <shortName evidence="1">MTRu-1-P dehydratase</shortName>
        <ecNumber evidence="1">4.2.1.109</ecNumber>
    </recommendedName>
</protein>
<feature type="chain" id="PRO_0000393823" description="Methylthioribulose-1-phosphate dehydratase">
    <location>
        <begin position="1"/>
        <end position="265"/>
    </location>
</feature>
<feature type="active site" description="Proton donor/acceptor" evidence="1">
    <location>
        <position position="159"/>
    </location>
</feature>
<feature type="binding site" evidence="1">
    <location>
        <position position="116"/>
    </location>
    <ligand>
        <name>substrate</name>
    </ligand>
</feature>
<feature type="binding site" evidence="1">
    <location>
        <position position="134"/>
    </location>
    <ligand>
        <name>Zn(2+)</name>
        <dbReference type="ChEBI" id="CHEBI:29105"/>
    </ligand>
</feature>
<feature type="binding site" evidence="1">
    <location>
        <position position="136"/>
    </location>
    <ligand>
        <name>Zn(2+)</name>
        <dbReference type="ChEBI" id="CHEBI:29105"/>
    </ligand>
</feature>
<feature type="binding site" evidence="1">
    <location>
        <position position="224"/>
    </location>
    <ligand>
        <name>Zn(2+)</name>
        <dbReference type="ChEBI" id="CHEBI:29105"/>
    </ligand>
</feature>
<sequence>MSASCFCNKKNDQISKLDDSLLDANDPNHPANLICELCRLFYDNNWVTGTGGGISIRDVKGENPNLVYIAPSGIQKEKLQPWEMFVVELPDEKLLRTPNDCPAELTKSYKYKPSACTPLFMSCYTMRDAGACIHTHSQNAVMCSLLWGDKVEFEISHIEQIKALPKLAVNEKTGKVEKVGSMQYFDKLVLPIIENTPHEEDLTDSLQEAIKNYPGTTAVLVRRHGIYVWGEDVWKAKVYNEALDYLLELAVKMKQSGIPTTTQTD</sequence>
<organism>
    <name type="scientific">Debaryomyces hansenii (strain ATCC 36239 / CBS 767 / BCRC 21394 / JCM 1990 / NBRC 0083 / IGC 2968)</name>
    <name type="common">Yeast</name>
    <name type="synonym">Torulaspora hansenii</name>
    <dbReference type="NCBI Taxonomy" id="284592"/>
    <lineage>
        <taxon>Eukaryota</taxon>
        <taxon>Fungi</taxon>
        <taxon>Dikarya</taxon>
        <taxon>Ascomycota</taxon>
        <taxon>Saccharomycotina</taxon>
        <taxon>Pichiomycetes</taxon>
        <taxon>Debaryomycetaceae</taxon>
        <taxon>Debaryomyces</taxon>
    </lineage>
</organism>
<gene>
    <name evidence="1" type="primary">MDE1</name>
    <name type="ordered locus">DEHA2G06864g</name>
</gene>
<proteinExistence type="inferred from homology"/>
<reference key="1">
    <citation type="journal article" date="2004" name="Nature">
        <title>Genome evolution in yeasts.</title>
        <authorList>
            <person name="Dujon B."/>
            <person name="Sherman D."/>
            <person name="Fischer G."/>
            <person name="Durrens P."/>
            <person name="Casaregola S."/>
            <person name="Lafontaine I."/>
            <person name="de Montigny J."/>
            <person name="Marck C."/>
            <person name="Neuveglise C."/>
            <person name="Talla E."/>
            <person name="Goffard N."/>
            <person name="Frangeul L."/>
            <person name="Aigle M."/>
            <person name="Anthouard V."/>
            <person name="Babour A."/>
            <person name="Barbe V."/>
            <person name="Barnay S."/>
            <person name="Blanchin S."/>
            <person name="Beckerich J.-M."/>
            <person name="Beyne E."/>
            <person name="Bleykasten C."/>
            <person name="Boisrame A."/>
            <person name="Boyer J."/>
            <person name="Cattolico L."/>
            <person name="Confanioleri F."/>
            <person name="de Daruvar A."/>
            <person name="Despons L."/>
            <person name="Fabre E."/>
            <person name="Fairhead C."/>
            <person name="Ferry-Dumazet H."/>
            <person name="Groppi A."/>
            <person name="Hantraye F."/>
            <person name="Hennequin C."/>
            <person name="Jauniaux N."/>
            <person name="Joyet P."/>
            <person name="Kachouri R."/>
            <person name="Kerrest A."/>
            <person name="Koszul R."/>
            <person name="Lemaire M."/>
            <person name="Lesur I."/>
            <person name="Ma L."/>
            <person name="Muller H."/>
            <person name="Nicaud J.-M."/>
            <person name="Nikolski M."/>
            <person name="Oztas S."/>
            <person name="Ozier-Kalogeropoulos O."/>
            <person name="Pellenz S."/>
            <person name="Potier S."/>
            <person name="Richard G.-F."/>
            <person name="Straub M.-L."/>
            <person name="Suleau A."/>
            <person name="Swennen D."/>
            <person name="Tekaia F."/>
            <person name="Wesolowski-Louvel M."/>
            <person name="Westhof E."/>
            <person name="Wirth B."/>
            <person name="Zeniou-Meyer M."/>
            <person name="Zivanovic Y."/>
            <person name="Bolotin-Fukuhara M."/>
            <person name="Thierry A."/>
            <person name="Bouchier C."/>
            <person name="Caudron B."/>
            <person name="Scarpelli C."/>
            <person name="Gaillardin C."/>
            <person name="Weissenbach J."/>
            <person name="Wincker P."/>
            <person name="Souciet J.-L."/>
        </authorList>
    </citation>
    <scope>NUCLEOTIDE SEQUENCE [LARGE SCALE GENOMIC DNA]</scope>
    <source>
        <strain>ATCC 36239 / CBS 767 / BCRC 21394 / JCM 1990 / NBRC 0083 / IGC 2968</strain>
    </source>
</reference>
<dbReference type="EC" id="4.2.1.109" evidence="1"/>
<dbReference type="EMBL" id="CR382139">
    <property type="protein sequence ID" value="CAG90307.1"/>
    <property type="molecule type" value="Genomic_DNA"/>
</dbReference>
<dbReference type="RefSeq" id="XP_461846.1">
    <property type="nucleotide sequence ID" value="XM_461846.1"/>
</dbReference>
<dbReference type="SMR" id="Q6BIX5"/>
<dbReference type="FunCoup" id="Q6BIX5">
    <property type="interactions" value="261"/>
</dbReference>
<dbReference type="STRING" id="284592.Q6BIX5"/>
<dbReference type="GeneID" id="2904725"/>
<dbReference type="KEGG" id="dha:DEHA2G06864g"/>
<dbReference type="VEuPathDB" id="FungiDB:DEHA2G06864g"/>
<dbReference type="eggNOG" id="KOG2631">
    <property type="taxonomic scope" value="Eukaryota"/>
</dbReference>
<dbReference type="HOGENOM" id="CLU_006033_4_0_1"/>
<dbReference type="InParanoid" id="Q6BIX5"/>
<dbReference type="OMA" id="WFPGTSG"/>
<dbReference type="OrthoDB" id="191080at2759"/>
<dbReference type="UniPathway" id="UPA00904">
    <property type="reaction ID" value="UER00875"/>
</dbReference>
<dbReference type="Proteomes" id="UP000000599">
    <property type="component" value="Chromosome G"/>
</dbReference>
<dbReference type="GO" id="GO:0005737">
    <property type="term" value="C:cytoplasm"/>
    <property type="evidence" value="ECO:0007669"/>
    <property type="project" value="UniProtKB-SubCell"/>
</dbReference>
<dbReference type="GO" id="GO:0046570">
    <property type="term" value="F:methylthioribulose 1-phosphate dehydratase activity"/>
    <property type="evidence" value="ECO:0007669"/>
    <property type="project" value="UniProtKB-UniRule"/>
</dbReference>
<dbReference type="GO" id="GO:0008270">
    <property type="term" value="F:zinc ion binding"/>
    <property type="evidence" value="ECO:0007669"/>
    <property type="project" value="UniProtKB-UniRule"/>
</dbReference>
<dbReference type="GO" id="GO:0019509">
    <property type="term" value="P:L-methionine salvage from methylthioadenosine"/>
    <property type="evidence" value="ECO:0007669"/>
    <property type="project" value="UniProtKB-UniRule"/>
</dbReference>
<dbReference type="FunFam" id="3.40.225.10:FF:000003">
    <property type="entry name" value="Methylthioribulose-1-phosphate dehydratase"/>
    <property type="match status" value="1"/>
</dbReference>
<dbReference type="Gene3D" id="3.40.225.10">
    <property type="entry name" value="Class II aldolase/adducin N-terminal domain"/>
    <property type="match status" value="1"/>
</dbReference>
<dbReference type="HAMAP" id="MF_03116">
    <property type="entry name" value="Salvage_MtnB_euk"/>
    <property type="match status" value="1"/>
</dbReference>
<dbReference type="InterPro" id="IPR001303">
    <property type="entry name" value="Aldolase_II/adducin_N"/>
</dbReference>
<dbReference type="InterPro" id="IPR036409">
    <property type="entry name" value="Aldolase_II/adducin_N_sf"/>
</dbReference>
<dbReference type="InterPro" id="IPR017714">
    <property type="entry name" value="MethylthioRu-1-P_deHdtase_MtnB"/>
</dbReference>
<dbReference type="InterPro" id="IPR027514">
    <property type="entry name" value="Salvage_MtnB_euk"/>
</dbReference>
<dbReference type="NCBIfam" id="TIGR03328">
    <property type="entry name" value="salvage_mtnB"/>
    <property type="match status" value="1"/>
</dbReference>
<dbReference type="PANTHER" id="PTHR10640">
    <property type="entry name" value="METHYLTHIORIBULOSE-1-PHOSPHATE DEHYDRATASE"/>
    <property type="match status" value="1"/>
</dbReference>
<dbReference type="PANTHER" id="PTHR10640:SF7">
    <property type="entry name" value="METHYLTHIORIBULOSE-1-PHOSPHATE DEHYDRATASE"/>
    <property type="match status" value="1"/>
</dbReference>
<dbReference type="Pfam" id="PF00596">
    <property type="entry name" value="Aldolase_II"/>
    <property type="match status" value="1"/>
</dbReference>
<dbReference type="SMART" id="SM01007">
    <property type="entry name" value="Aldolase_II"/>
    <property type="match status" value="1"/>
</dbReference>
<dbReference type="SUPFAM" id="SSF53639">
    <property type="entry name" value="AraD/HMP-PK domain-like"/>
    <property type="match status" value="1"/>
</dbReference>
<name>MTNB_DEBHA</name>
<comment type="function">
    <text evidence="1">Catalyzes the dehydration of methylthioribulose-1-phosphate (MTRu-1-P) into 2,3-diketo-5-methylthiopentyl-1-phosphate (DK-MTP-1-P).</text>
</comment>
<comment type="catalytic activity">
    <reaction evidence="1">
        <text>5-(methylsulfanyl)-D-ribulose 1-phosphate = 5-methylsulfanyl-2,3-dioxopentyl phosphate + H2O</text>
        <dbReference type="Rhea" id="RHEA:15549"/>
        <dbReference type="ChEBI" id="CHEBI:15377"/>
        <dbReference type="ChEBI" id="CHEBI:58548"/>
        <dbReference type="ChEBI" id="CHEBI:58828"/>
        <dbReference type="EC" id="4.2.1.109"/>
    </reaction>
</comment>
<comment type="cofactor">
    <cofactor evidence="1">
        <name>Zn(2+)</name>
        <dbReference type="ChEBI" id="CHEBI:29105"/>
    </cofactor>
    <text evidence="1">Binds 1 zinc ion per subunit.</text>
</comment>
<comment type="pathway">
    <text evidence="1">Amino-acid biosynthesis; L-methionine biosynthesis via salvage pathway; L-methionine from S-methyl-5-thio-alpha-D-ribose 1-phosphate: step 2/6.</text>
</comment>
<comment type="subcellular location">
    <subcellularLocation>
        <location evidence="1">Cytoplasm</location>
    </subcellularLocation>
</comment>
<comment type="similarity">
    <text evidence="1">Belongs to the aldolase class II family. MtnB subfamily.</text>
</comment>